<comment type="function">
    <text evidence="4 5 6 7 8 13">Highly selective inward-rectifying potassium channel that mediate potassium uptake by plant roots in response to low K(+) conditions, by a calcium-, CBL-, and CIPK-dependent pathway. Positively regulated by phosphorylation by CIPK23. Negatively regulated by a kinase-independent regulatory mechanism involving a competing direct binding of CBL10. Involved in the stomatal regulation by monitoring the turgor pressure in guard cells. Assuming opened or closed conformations in response to the voltage difference across the membrane, the channel is activated by hyperpolarization. May interact with the cytoskeleton or with regulatory proteins (PubMed:12678562, PubMed:16814720, PubMed:16895985, PubMed:17898163, PubMed:9572739). Is essential with POT5/HAK5 for high-affinity potassium uptake in roots during seedling establishment and postgermination growth under low potassium conditions (PubMed:20413648).</text>
</comment>
<comment type="subunit">
    <text evidence="4 5 6 7 9 12">The potassium channel is probably composed of a homo- or heterotetrameric complex of pore-forming subunits. Possible heteromultimer with AKT2 or KAT3. Part of a K(+)-channel calcium-sensing kinase/phosphatase complex composed by a calcium sensor CBL (CBL1, CBL2, CBL3 or CBL9), a kinase CIPK (CIPK6, CIPK16 or CIPK23), a phosphatase PP2C (AIP1) and a K(+)-channel (AKT1). Interacts directly with AIP1, CBL10, CIPK6, CIPK16 and CIPK23.</text>
</comment>
<comment type="interaction">
    <interactant intactId="EBI-974289">
        <id>Q38998</id>
    </interactant>
    <interactant intactId="EBI-974289">
        <id>Q38998</id>
        <label>AKT1</label>
    </interactant>
    <organismsDiffer>false</organismsDiffer>
    <experiments>7</experiments>
</comment>
<comment type="interaction">
    <interactant intactId="EBI-974289">
        <id>Q38998</id>
    </interactant>
    <interactant intactId="EBI-1552774">
        <id>Q38898</id>
        <label>AKT2</label>
    </interactant>
    <organismsDiffer>false</organismsDiffer>
    <experiments>3</experiments>
</comment>
<comment type="interaction">
    <interactant intactId="EBI-974289">
        <id>Q38998</id>
    </interactant>
    <interactant intactId="EBI-974277">
        <id>Q93VD3</id>
        <label>CIPK23</label>
    </interactant>
    <organismsDiffer>false</organismsDiffer>
    <experiments>6</experiments>
</comment>
<comment type="subcellular location">
    <subcellularLocation>
        <location evidence="5">Cell membrane</location>
        <topology evidence="5">Multi-pass membrane protein</topology>
    </subcellularLocation>
</comment>
<comment type="tissue specificity">
    <text evidence="10 11">Preferentially expressed in the peripheral cell layers of root mature including root cortex and root hairs. Detected also, at a lower level, in the mesophyll of the leaves and at restricted sites corresponding to hydathodes and guard cells.</text>
</comment>
<comment type="induction">
    <text evidence="4">In roots, strongly reduced after 2,4-dichlorophenoxyacetic acid (2,4-D) treatment and weakly reduced after benzyladenine (BA) treatment. In shoots, strongly reduced after abscisic acid (ABA) treatment and induced after benzyladenine (BA) treatment.</text>
</comment>
<comment type="domain">
    <text>The segment S4 is probably the voltage-sensor and is characterized by a series of positively charged amino acids. The pore-forming region H5 is enclosed by the transmembrane segments S5 and S6 in the Shaker-type (1P/6TM) and contains the GYGD signature motif which seems to be involved in potassium selectivity.</text>
</comment>
<comment type="domain">
    <text>The KHA domain (rich in hydrophobic and acidic residues) present in the C-terminal part is likely to be important for tetramerization.</text>
</comment>
<comment type="PTM">
    <text evidence="5 6 7">Phosphorylated by CIPK proteins CIPK6, CIPK16 and CIPK23. The activation by phosphorylation is induced by low K(+) conditions and stimulates K(+) uptake and relocation. Dephosphorylation by AIP1 repressed the transport activity.</text>
</comment>
<comment type="similarity">
    <text evidence="14">Belongs to the potassium channel family. Plant (TC 1.A.1.4) subfamily.</text>
</comment>
<gene>
    <name type="primary">AKT1</name>
    <name type="ordered locus">At2g26650</name>
    <name type="ORF">F18A8.2</name>
</gene>
<accession>Q38998</accession>
<accession>B9DI19</accession>
<accession>Q0WTF6</accession>
<accession>Q38797</accession>
<accession>Q84MA7</accession>
<proteinExistence type="evidence at protein level"/>
<keyword id="KW-0002">3D-structure</keyword>
<keyword id="KW-0040">ANK repeat</keyword>
<keyword id="KW-1003">Cell membrane</keyword>
<keyword id="KW-0407">Ion channel</keyword>
<keyword id="KW-0406">Ion transport</keyword>
<keyword id="KW-0472">Membrane</keyword>
<keyword id="KW-0597">Phosphoprotein</keyword>
<keyword id="KW-0630">Potassium</keyword>
<keyword id="KW-0631">Potassium channel</keyword>
<keyword id="KW-0633">Potassium transport</keyword>
<keyword id="KW-1185">Reference proteome</keyword>
<keyword id="KW-0677">Repeat</keyword>
<keyword id="KW-0812">Transmembrane</keyword>
<keyword id="KW-1133">Transmembrane helix</keyword>
<keyword id="KW-0813">Transport</keyword>
<keyword id="KW-0851">Voltage-gated channel</keyword>
<protein>
    <recommendedName>
        <fullName>Potassium channel AKT1</fullName>
    </recommendedName>
</protein>
<name>AKT1_ARATH</name>
<dbReference type="EMBL" id="X62907">
    <property type="protein sequence ID" value="CAA44693.1"/>
    <property type="molecule type" value="mRNA"/>
</dbReference>
<dbReference type="EMBL" id="U06745">
    <property type="protein sequence ID" value="AAA96810.1"/>
    <property type="molecule type" value="Genomic_DNA"/>
</dbReference>
<dbReference type="EMBL" id="AC003105">
    <property type="protein sequence ID" value="AAB95299.1"/>
    <property type="molecule type" value="Genomic_DNA"/>
</dbReference>
<dbReference type="EMBL" id="CP002685">
    <property type="protein sequence ID" value="AEC07870.1"/>
    <property type="molecule type" value="Genomic_DNA"/>
</dbReference>
<dbReference type="EMBL" id="AK317729">
    <property type="protein sequence ID" value="BAH20386.1"/>
    <property type="molecule type" value="mRNA"/>
</dbReference>
<dbReference type="EMBL" id="AK227601">
    <property type="protein sequence ID" value="BAE99592.1"/>
    <property type="molecule type" value="mRNA"/>
</dbReference>
<dbReference type="EMBL" id="BT006442">
    <property type="protein sequence ID" value="AAP21250.1"/>
    <property type="molecule type" value="mRNA"/>
</dbReference>
<dbReference type="PIR" id="S23606">
    <property type="entry name" value="S23606"/>
</dbReference>
<dbReference type="PIR" id="S62694">
    <property type="entry name" value="S62694"/>
</dbReference>
<dbReference type="RefSeq" id="NP_001324538.1">
    <property type="nucleotide sequence ID" value="NM_001336078.1"/>
</dbReference>
<dbReference type="RefSeq" id="NP_180233.1">
    <property type="nucleotide sequence ID" value="NM_128222.6"/>
</dbReference>
<dbReference type="PDB" id="5AAR">
    <property type="method" value="X-ray"/>
    <property type="resolution" value="1.87 A"/>
    <property type="chains" value="A=518-702"/>
</dbReference>
<dbReference type="PDB" id="7FCV">
    <property type="method" value="EM"/>
    <property type="resolution" value="2.90 A"/>
    <property type="chains" value="A/B/C/D=1-857"/>
</dbReference>
<dbReference type="PDB" id="7T4X">
    <property type="method" value="EM"/>
    <property type="resolution" value="2.80 A"/>
    <property type="chains" value="A/B/C/D=1-857"/>
</dbReference>
<dbReference type="PDB" id="7WM1">
    <property type="method" value="EM"/>
    <property type="resolution" value="2.80 A"/>
    <property type="chains" value="A/C=1-857"/>
</dbReference>
<dbReference type="PDB" id="7WM2">
    <property type="method" value="EM"/>
    <property type="resolution" value="2.69 A"/>
    <property type="chains" value="A/B/C/D=1-857"/>
</dbReference>
<dbReference type="PDB" id="7WSW">
    <property type="method" value="EM"/>
    <property type="resolution" value="3.40 A"/>
    <property type="chains" value="A/B/C/D=1-857"/>
</dbReference>
<dbReference type="PDB" id="7XUF">
    <property type="method" value="EM"/>
    <property type="resolution" value="3.30 A"/>
    <property type="chains" value="B/D=1-857"/>
</dbReference>
<dbReference type="PDBsum" id="5AAR"/>
<dbReference type="PDBsum" id="7FCV"/>
<dbReference type="PDBsum" id="7T4X"/>
<dbReference type="PDBsum" id="7WM1"/>
<dbReference type="PDBsum" id="7WM2"/>
<dbReference type="PDBsum" id="7WSW"/>
<dbReference type="PDBsum" id="7XUF"/>
<dbReference type="EMDB" id="EMD-25691"/>
<dbReference type="EMDB" id="EMD-31532"/>
<dbReference type="EMDB" id="EMD-32597"/>
<dbReference type="EMDB" id="EMD-32598"/>
<dbReference type="EMDB" id="EMD-32769"/>
<dbReference type="EMDB" id="EMD-33467"/>
<dbReference type="SMR" id="Q38998"/>
<dbReference type="BioGRID" id="2558">
    <property type="interactions" value="17"/>
</dbReference>
<dbReference type="DIP" id="DIP-36762N"/>
<dbReference type="FunCoup" id="Q38998">
    <property type="interactions" value="231"/>
</dbReference>
<dbReference type="IntAct" id="Q38998">
    <property type="interactions" value="9"/>
</dbReference>
<dbReference type="STRING" id="3702.Q38998"/>
<dbReference type="TCDB" id="1.A.1.4.1">
    <property type="family name" value="the voltage-gated ion channel (vic) superfamily"/>
</dbReference>
<dbReference type="iPTMnet" id="Q38998"/>
<dbReference type="PaxDb" id="3702-AT2G26650.1"/>
<dbReference type="ProteomicsDB" id="244667"/>
<dbReference type="EnsemblPlants" id="AT2G26650.1">
    <property type="protein sequence ID" value="AT2G26650.1"/>
    <property type="gene ID" value="AT2G26650"/>
</dbReference>
<dbReference type="GeneID" id="817206"/>
<dbReference type="Gramene" id="AT2G26650.1">
    <property type="protein sequence ID" value="AT2G26650.1"/>
    <property type="gene ID" value="AT2G26650"/>
</dbReference>
<dbReference type="KEGG" id="ath:AT2G26650"/>
<dbReference type="Araport" id="AT2G26650"/>
<dbReference type="TAIR" id="AT2G26650">
    <property type="gene designation" value="KT1"/>
</dbReference>
<dbReference type="eggNOG" id="KOG0498">
    <property type="taxonomic scope" value="Eukaryota"/>
</dbReference>
<dbReference type="HOGENOM" id="CLU_005746_8_3_1"/>
<dbReference type="InParanoid" id="Q38998"/>
<dbReference type="OMA" id="KRVTFQN"/>
<dbReference type="PhylomeDB" id="Q38998"/>
<dbReference type="BioCyc" id="ARA:AT2G26550-MONOMER"/>
<dbReference type="BioCyc" id="MetaCyc:MONOMER-14552"/>
<dbReference type="PRO" id="PR:Q38998"/>
<dbReference type="Proteomes" id="UP000006548">
    <property type="component" value="Chromosome 2"/>
</dbReference>
<dbReference type="ExpressionAtlas" id="Q38998">
    <property type="expression patterns" value="baseline and differential"/>
</dbReference>
<dbReference type="GO" id="GO:0034702">
    <property type="term" value="C:monoatomic ion channel complex"/>
    <property type="evidence" value="ECO:0007669"/>
    <property type="project" value="UniProtKB-KW"/>
</dbReference>
<dbReference type="GO" id="GO:0005886">
    <property type="term" value="C:plasma membrane"/>
    <property type="evidence" value="ECO:0007669"/>
    <property type="project" value="UniProtKB-SubCell"/>
</dbReference>
<dbReference type="GO" id="GO:0042802">
    <property type="term" value="F:identical protein binding"/>
    <property type="evidence" value="ECO:0000353"/>
    <property type="project" value="IntAct"/>
</dbReference>
<dbReference type="GO" id="GO:0005242">
    <property type="term" value="F:inward rectifier potassium channel activity"/>
    <property type="evidence" value="ECO:0000314"/>
    <property type="project" value="TAIR"/>
</dbReference>
<dbReference type="GO" id="GO:1990573">
    <property type="term" value="P:potassium ion import across plasma membrane"/>
    <property type="evidence" value="ECO:0000314"/>
    <property type="project" value="TAIR"/>
</dbReference>
<dbReference type="GO" id="GO:0006813">
    <property type="term" value="P:potassium ion transport"/>
    <property type="evidence" value="ECO:0000315"/>
    <property type="project" value="TAIR"/>
</dbReference>
<dbReference type="GO" id="GO:0090333">
    <property type="term" value="P:regulation of stomatal closure"/>
    <property type="evidence" value="ECO:0000315"/>
    <property type="project" value="TAIR"/>
</dbReference>
<dbReference type="GO" id="GO:0009651">
    <property type="term" value="P:response to salt stress"/>
    <property type="evidence" value="ECO:0000315"/>
    <property type="project" value="TAIR"/>
</dbReference>
<dbReference type="GO" id="GO:0009414">
    <property type="term" value="P:response to water deprivation"/>
    <property type="evidence" value="ECO:0000315"/>
    <property type="project" value="TAIR"/>
</dbReference>
<dbReference type="GO" id="GO:0048767">
    <property type="term" value="P:root hair elongation"/>
    <property type="evidence" value="ECO:0000315"/>
    <property type="project" value="TAIR"/>
</dbReference>
<dbReference type="CDD" id="cd00038">
    <property type="entry name" value="CAP_ED"/>
    <property type="match status" value="1"/>
</dbReference>
<dbReference type="FunFam" id="1.25.40.20:FF:000575">
    <property type="entry name" value="Potassium channel AKT1"/>
    <property type="match status" value="1"/>
</dbReference>
<dbReference type="FunFam" id="2.60.120.10:FF:000074">
    <property type="entry name" value="Potassium channel KAT2"/>
    <property type="match status" value="1"/>
</dbReference>
<dbReference type="FunFam" id="1.10.287.70:FF:000139">
    <property type="entry name" value="Potassium channel SKOR"/>
    <property type="match status" value="1"/>
</dbReference>
<dbReference type="Gene3D" id="1.10.287.70">
    <property type="match status" value="1"/>
</dbReference>
<dbReference type="Gene3D" id="1.25.40.20">
    <property type="entry name" value="Ankyrin repeat-containing domain"/>
    <property type="match status" value="1"/>
</dbReference>
<dbReference type="Gene3D" id="2.60.120.10">
    <property type="entry name" value="Jelly Rolls"/>
    <property type="match status" value="1"/>
</dbReference>
<dbReference type="InterPro" id="IPR002110">
    <property type="entry name" value="Ankyrin_rpt"/>
</dbReference>
<dbReference type="InterPro" id="IPR036770">
    <property type="entry name" value="Ankyrin_rpt-contain_sf"/>
</dbReference>
<dbReference type="InterPro" id="IPR000595">
    <property type="entry name" value="cNMP-bd_dom"/>
</dbReference>
<dbReference type="InterPro" id="IPR018490">
    <property type="entry name" value="cNMP-bd_dom_sf"/>
</dbReference>
<dbReference type="InterPro" id="IPR005821">
    <property type="entry name" value="Ion_trans_dom"/>
</dbReference>
<dbReference type="InterPro" id="IPR003938">
    <property type="entry name" value="K_chnl_volt-dep_EAG/ELK/ERG"/>
</dbReference>
<dbReference type="InterPro" id="IPR045319">
    <property type="entry name" value="KAT/AKT"/>
</dbReference>
<dbReference type="InterPro" id="IPR021789">
    <property type="entry name" value="KHA_dom"/>
</dbReference>
<dbReference type="InterPro" id="IPR014710">
    <property type="entry name" value="RmlC-like_jellyroll"/>
</dbReference>
<dbReference type="PANTHER" id="PTHR45743">
    <property type="entry name" value="POTASSIUM CHANNEL AKT1"/>
    <property type="match status" value="1"/>
</dbReference>
<dbReference type="PANTHER" id="PTHR45743:SF2">
    <property type="entry name" value="POTASSIUM CHANNEL AKT1"/>
    <property type="match status" value="1"/>
</dbReference>
<dbReference type="Pfam" id="PF12796">
    <property type="entry name" value="Ank_2"/>
    <property type="match status" value="2"/>
</dbReference>
<dbReference type="Pfam" id="PF00027">
    <property type="entry name" value="cNMP_binding"/>
    <property type="match status" value="1"/>
</dbReference>
<dbReference type="Pfam" id="PF00520">
    <property type="entry name" value="Ion_trans"/>
    <property type="match status" value="1"/>
</dbReference>
<dbReference type="Pfam" id="PF11834">
    <property type="entry name" value="KHA"/>
    <property type="match status" value="1"/>
</dbReference>
<dbReference type="PRINTS" id="PR01415">
    <property type="entry name" value="ANKYRIN"/>
</dbReference>
<dbReference type="PRINTS" id="PR01463">
    <property type="entry name" value="EAGCHANLFMLY"/>
</dbReference>
<dbReference type="SMART" id="SM00248">
    <property type="entry name" value="ANK"/>
    <property type="match status" value="5"/>
</dbReference>
<dbReference type="SMART" id="SM00100">
    <property type="entry name" value="cNMP"/>
    <property type="match status" value="1"/>
</dbReference>
<dbReference type="SUPFAM" id="SSF48403">
    <property type="entry name" value="Ankyrin repeat"/>
    <property type="match status" value="1"/>
</dbReference>
<dbReference type="SUPFAM" id="SSF51206">
    <property type="entry name" value="cAMP-binding domain-like"/>
    <property type="match status" value="1"/>
</dbReference>
<dbReference type="SUPFAM" id="SSF81324">
    <property type="entry name" value="Voltage-gated potassium channels"/>
    <property type="match status" value="1"/>
</dbReference>
<dbReference type="PROSITE" id="PS50297">
    <property type="entry name" value="ANK_REP_REGION"/>
    <property type="match status" value="1"/>
</dbReference>
<dbReference type="PROSITE" id="PS50088">
    <property type="entry name" value="ANK_REPEAT"/>
    <property type="match status" value="3"/>
</dbReference>
<dbReference type="PROSITE" id="PS50042">
    <property type="entry name" value="CNMP_BINDING_3"/>
    <property type="match status" value="1"/>
</dbReference>
<dbReference type="PROSITE" id="PS51490">
    <property type="entry name" value="KHA"/>
    <property type="match status" value="1"/>
</dbReference>
<evidence type="ECO:0000255" key="1"/>
<evidence type="ECO:0000255" key="2">
    <source>
        <dbReference type="PROSITE-ProRule" id="PRU00060"/>
    </source>
</evidence>
<evidence type="ECO:0000255" key="3">
    <source>
        <dbReference type="PROSITE-ProRule" id="PRU00823"/>
    </source>
</evidence>
<evidence type="ECO:0000269" key="4">
    <source>
    </source>
</evidence>
<evidence type="ECO:0000269" key="5">
    <source>
    </source>
</evidence>
<evidence type="ECO:0000269" key="6">
    <source>
    </source>
</evidence>
<evidence type="ECO:0000269" key="7">
    <source>
    </source>
</evidence>
<evidence type="ECO:0000269" key="8">
    <source>
    </source>
</evidence>
<evidence type="ECO:0000269" key="9">
    <source>
    </source>
</evidence>
<evidence type="ECO:0000269" key="10">
    <source>
    </source>
</evidence>
<evidence type="ECO:0000269" key="11">
    <source>
    </source>
</evidence>
<evidence type="ECO:0000269" key="12">
    <source>
    </source>
</evidence>
<evidence type="ECO:0000269" key="13">
    <source>
    </source>
</evidence>
<evidence type="ECO:0000305" key="14"/>
<evidence type="ECO:0000312" key="15">
    <source>
        <dbReference type="EMBL" id="BAH20386.1"/>
    </source>
</evidence>
<evidence type="ECO:0007829" key="16">
    <source>
        <dbReference type="PDB" id="5AAR"/>
    </source>
</evidence>
<evidence type="ECO:0007829" key="17">
    <source>
        <dbReference type="PDB" id="7T4X"/>
    </source>
</evidence>
<evidence type="ECO:0007829" key="18">
    <source>
        <dbReference type="PDB" id="7WM1"/>
    </source>
</evidence>
<evidence type="ECO:0007829" key="19">
    <source>
        <dbReference type="PDB" id="7WM2"/>
    </source>
</evidence>
<reference key="1">
    <citation type="journal article" date="1992" name="Science">
        <title>Cloning and expression in yeast of a plant potassium ion transport system.</title>
        <authorList>
            <person name="Sentenac H."/>
            <person name="Bonneaud N."/>
            <person name="Minet M."/>
            <person name="Lacroute F."/>
            <person name="Salmon J.-M."/>
            <person name="Gaymard F."/>
            <person name="Grignon C."/>
        </authorList>
    </citation>
    <scope>NUCLEOTIDE SEQUENCE [MRNA]</scope>
    <source>
        <strain>cv. Landsberg erecta</strain>
    </source>
</reference>
<reference key="2">
    <citation type="submission" date="1997-10" db="EMBL/GenBank/DDBJ databases">
        <authorList>
            <person name="Sentenac H."/>
        </authorList>
    </citation>
    <scope>SEQUENCE REVISION</scope>
</reference>
<reference key="3">
    <citation type="journal article" date="1995" name="Plant Mol. Biol.">
        <title>Organization and expression of the gene coding for the potassium transport system AKT1 of Arabidopsis thaliana.</title>
        <authorList>
            <person name="Basset M."/>
            <person name="Conejero G."/>
            <person name="Lepetit M."/>
            <person name="Fourcroy P."/>
            <person name="Sentenac H."/>
        </authorList>
    </citation>
    <scope>NUCLEOTIDE SEQUENCE [GENOMIC DNA]</scope>
    <scope>TISSUE SPECIFICITY</scope>
    <source>
        <strain>cv. Landsberg erecta</strain>
    </source>
</reference>
<reference key="4">
    <citation type="journal article" date="1999" name="Nature">
        <title>Sequence and analysis of chromosome 2 of the plant Arabidopsis thaliana.</title>
        <authorList>
            <person name="Lin X."/>
            <person name="Kaul S."/>
            <person name="Rounsley S.D."/>
            <person name="Shea T.P."/>
            <person name="Benito M.-I."/>
            <person name="Town C.D."/>
            <person name="Fujii C.Y."/>
            <person name="Mason T.M."/>
            <person name="Bowman C.L."/>
            <person name="Barnstead M.E."/>
            <person name="Feldblyum T.V."/>
            <person name="Buell C.R."/>
            <person name="Ketchum K.A."/>
            <person name="Lee J.J."/>
            <person name="Ronning C.M."/>
            <person name="Koo H.L."/>
            <person name="Moffat K.S."/>
            <person name="Cronin L.A."/>
            <person name="Shen M."/>
            <person name="Pai G."/>
            <person name="Van Aken S."/>
            <person name="Umayam L."/>
            <person name="Tallon L.J."/>
            <person name="Gill J.E."/>
            <person name="Adams M.D."/>
            <person name="Carrera A.J."/>
            <person name="Creasy T.H."/>
            <person name="Goodman H.M."/>
            <person name="Somerville C.R."/>
            <person name="Copenhaver G.P."/>
            <person name="Preuss D."/>
            <person name="Nierman W.C."/>
            <person name="White O."/>
            <person name="Eisen J.A."/>
            <person name="Salzberg S.L."/>
            <person name="Fraser C.M."/>
            <person name="Venter J.C."/>
        </authorList>
    </citation>
    <scope>NUCLEOTIDE SEQUENCE [LARGE SCALE GENOMIC DNA]</scope>
    <source>
        <strain>cv. Columbia</strain>
    </source>
</reference>
<reference key="5">
    <citation type="journal article" date="2017" name="Plant J.">
        <title>Araport11: a complete reannotation of the Arabidopsis thaliana reference genome.</title>
        <authorList>
            <person name="Cheng C.Y."/>
            <person name="Krishnakumar V."/>
            <person name="Chan A.P."/>
            <person name="Thibaud-Nissen F."/>
            <person name="Schobel S."/>
            <person name="Town C.D."/>
        </authorList>
    </citation>
    <scope>GENOME REANNOTATION</scope>
    <source>
        <strain>cv. Columbia</strain>
    </source>
</reference>
<reference key="6">
    <citation type="journal article" date="2009" name="DNA Res.">
        <title>Analysis of multiple occurrences of alternative splicing events in Arabidopsis thaliana using novel sequenced full-length cDNAs.</title>
        <authorList>
            <person name="Iida K."/>
            <person name="Fukami-Kobayashi K."/>
            <person name="Toyoda A."/>
            <person name="Sakaki Y."/>
            <person name="Kobayashi M."/>
            <person name="Seki M."/>
            <person name="Shinozaki K."/>
        </authorList>
    </citation>
    <scope>NUCLEOTIDE SEQUENCE [LARGE SCALE MRNA]</scope>
    <source>
        <strain>cv. Columbia</strain>
        <tissue evidence="15">Rosette leaf</tissue>
    </source>
</reference>
<reference key="7">
    <citation type="submission" date="2006-07" db="EMBL/GenBank/DDBJ databases">
        <title>Large-scale analysis of RIKEN Arabidopsis full-length (RAFL) cDNAs.</title>
        <authorList>
            <person name="Totoki Y."/>
            <person name="Seki M."/>
            <person name="Ishida J."/>
            <person name="Nakajima M."/>
            <person name="Enju A."/>
            <person name="Kamiya A."/>
            <person name="Narusaka M."/>
            <person name="Shin-i T."/>
            <person name="Nakagawa M."/>
            <person name="Sakamoto N."/>
            <person name="Oishi K."/>
            <person name="Kohara Y."/>
            <person name="Kobayashi M."/>
            <person name="Toyoda A."/>
            <person name="Sakaki Y."/>
            <person name="Sakurai T."/>
            <person name="Iida K."/>
            <person name="Akiyama K."/>
            <person name="Satou M."/>
            <person name="Toyoda T."/>
            <person name="Konagaya A."/>
            <person name="Carninci P."/>
            <person name="Kawai J."/>
            <person name="Hayashizaki Y."/>
            <person name="Shinozaki K."/>
        </authorList>
    </citation>
    <scope>NUCLEOTIDE SEQUENCE [LARGE SCALE MRNA] OF 79-857</scope>
    <source>
        <strain>cv. Columbia</strain>
    </source>
</reference>
<reference key="8">
    <citation type="journal article" date="2003" name="Science">
        <title>Empirical analysis of transcriptional activity in the Arabidopsis genome.</title>
        <authorList>
            <person name="Yamada K."/>
            <person name="Lim J."/>
            <person name="Dale J.M."/>
            <person name="Chen H."/>
            <person name="Shinn P."/>
            <person name="Palm C.J."/>
            <person name="Southwick A.M."/>
            <person name="Wu H.C."/>
            <person name="Kim C.J."/>
            <person name="Nguyen M."/>
            <person name="Pham P.K."/>
            <person name="Cheuk R.F."/>
            <person name="Karlin-Newmann G."/>
            <person name="Liu S.X."/>
            <person name="Lam B."/>
            <person name="Sakano H."/>
            <person name="Wu T."/>
            <person name="Yu G."/>
            <person name="Miranda M."/>
            <person name="Quach H.L."/>
            <person name="Tripp M."/>
            <person name="Chang C.H."/>
            <person name="Lee J.M."/>
            <person name="Toriumi M.J."/>
            <person name="Chan M.M."/>
            <person name="Tang C.C."/>
            <person name="Onodera C.S."/>
            <person name="Deng J.M."/>
            <person name="Akiyama K."/>
            <person name="Ansari Y."/>
            <person name="Arakawa T."/>
            <person name="Banh J."/>
            <person name="Banno F."/>
            <person name="Bowser L."/>
            <person name="Brooks S.Y."/>
            <person name="Carninci P."/>
            <person name="Chao Q."/>
            <person name="Choy N."/>
            <person name="Enju A."/>
            <person name="Goldsmith A.D."/>
            <person name="Gurjal M."/>
            <person name="Hansen N.F."/>
            <person name="Hayashizaki Y."/>
            <person name="Johnson-Hopson C."/>
            <person name="Hsuan V.W."/>
            <person name="Iida K."/>
            <person name="Karnes M."/>
            <person name="Khan S."/>
            <person name="Koesema E."/>
            <person name="Ishida J."/>
            <person name="Jiang P.X."/>
            <person name="Jones T."/>
            <person name="Kawai J."/>
            <person name="Kamiya A."/>
            <person name="Meyers C."/>
            <person name="Nakajima M."/>
            <person name="Narusaka M."/>
            <person name="Seki M."/>
            <person name="Sakurai T."/>
            <person name="Satou M."/>
            <person name="Tamse R."/>
            <person name="Vaysberg M."/>
            <person name="Wallender E.K."/>
            <person name="Wong C."/>
            <person name="Yamamura Y."/>
            <person name="Yuan S."/>
            <person name="Shinozaki K."/>
            <person name="Davis R.W."/>
            <person name="Theologis A."/>
            <person name="Ecker J.R."/>
        </authorList>
    </citation>
    <scope>NUCLEOTIDE SEQUENCE [LARGE SCALE MRNA] OF 106-857</scope>
    <source>
        <strain>cv. Columbia</strain>
    </source>
</reference>
<reference key="9">
    <citation type="journal article" date="1996" name="Plant J.">
        <title>Tissue-specific expression of Arabidopsis AKT1 gene is consistent with a role in K+ nutrition.</title>
        <authorList>
            <person name="Lagarde D."/>
            <person name="Basset M."/>
            <person name="Lepetit M."/>
            <person name="Conejero G."/>
            <person name="Gaymard F."/>
            <person name="Astruc S."/>
            <person name="Grignon C."/>
        </authorList>
    </citation>
    <scope>TISSUE SPECIFICITY</scope>
</reference>
<reference key="10">
    <citation type="journal article" date="1997" name="EMBO J.">
        <title>Tetramerization of the AKT1 plant potassium channel involves its C-terminal cytoplasmic domain.</title>
        <authorList>
            <person name="Daram P."/>
            <person name="Urbach S."/>
            <person name="Gaymard F."/>
            <person name="Sentenac H."/>
            <person name="Cherel I."/>
        </authorList>
    </citation>
    <scope>SUBUNIT</scope>
</reference>
<reference key="11">
    <citation type="journal article" date="1998" name="Science">
        <title>A role for the AKT1 potassium channel in plant nutrition.</title>
        <authorList>
            <person name="Hirsch R.E."/>
            <person name="Lewis B.D."/>
            <person name="Spalding E.P."/>
            <person name="Sussman M.R."/>
        </authorList>
    </citation>
    <scope>FUNCTION</scope>
</reference>
<reference key="12">
    <citation type="journal article" date="2001" name="Plant Physiol.">
        <title>Phylogenetic relationships within cation transporter families of Arabidopsis.</title>
        <authorList>
            <person name="Maeser P."/>
            <person name="Thomine S."/>
            <person name="Schroeder J.I."/>
            <person name="Ward J.M."/>
            <person name="Hirschi K."/>
            <person name="Sze H."/>
            <person name="Talke I.N."/>
            <person name="Amtmann A."/>
            <person name="Maathuis F.J.M."/>
            <person name="Sanders D."/>
            <person name="Harper J.F."/>
            <person name="Tchieu J."/>
            <person name="Gribskov M."/>
            <person name="Persans M.W."/>
            <person name="Salt D.E."/>
            <person name="Kim S.A."/>
            <person name="Guerinot M.L."/>
        </authorList>
    </citation>
    <scope>GENE FAMILY</scope>
    <scope>NOMENCLATURE</scope>
</reference>
<reference key="13">
    <citation type="journal article" date="2003" name="Plant Mol. Biol.">
        <title>Regulated expression of Arabidopsis shaker K(+) channel genes involved in K(+) uptake and distribution in the plant.</title>
        <authorList>
            <person name="Pilot G."/>
            <person name="Gaymard F."/>
            <person name="Mouline K."/>
            <person name="Cherel I."/>
            <person name="Sentenac H."/>
        </authorList>
    </citation>
    <scope>FUNCTION</scope>
    <scope>INTERACTION WITH AKT2 AND KAT3</scope>
    <scope>INDUCTION</scope>
</reference>
<reference key="14">
    <citation type="journal article" date="2006" name="Cell">
        <title>A protein kinase, interacting with two calcineurin B-like proteins, regulates K+ transporter AKT1 in Arabidopsis.</title>
        <authorList>
            <person name="Xu J."/>
            <person name="Li H.-D."/>
            <person name="Chen L.-Q."/>
            <person name="Wang Y."/>
            <person name="Liu L.-L."/>
            <person name="He L."/>
            <person name="Wu W.-H."/>
        </authorList>
    </citation>
    <scope>FUNCTION</scope>
    <scope>INTERACTION WITH CIPK23</scope>
    <scope>PHOSPHORYLATION</scope>
    <scope>SUBCELLULAR LOCATION</scope>
</reference>
<reference key="15">
    <citation type="journal article" date="2006" name="Proc. Natl. Acad. Sci. U.S.A.">
        <title>A Ca(2)+ signaling pathway regulates a K(+) channel for low-K response in Arabidopsis.</title>
        <authorList>
            <person name="Li L."/>
            <person name="Kim B.-G."/>
            <person name="Cheong Y.H."/>
            <person name="Pandey G.K."/>
            <person name="Luan S."/>
        </authorList>
    </citation>
    <scope>FUNCTION</scope>
    <scope>INTERACTION WITH CIPK23</scope>
    <scope>PHOSPHORYLATION</scope>
</reference>
<reference key="16">
    <citation type="journal article" date="2007" name="Proc. Natl. Acad. Sci. U.S.A.">
        <title>A protein phosphorylation/dephosphorylation network regulates a plant potassium channel.</title>
        <authorList>
            <person name="Lee S.-C."/>
            <person name="Lan W.-Z."/>
            <person name="Kim B.-G."/>
            <person name="Li L."/>
            <person name="Cheong Y.H."/>
            <person name="Pandey G.K."/>
            <person name="Lu G."/>
            <person name="Buchanan B.B."/>
            <person name="Luan S."/>
        </authorList>
    </citation>
    <scope>FUNCTION</scope>
    <scope>PHOSPHORYLATION</scope>
    <scope>INTERACTION WITH AIP1; CIPK6; CIPK16 AND CIPK23</scope>
</reference>
<reference key="17">
    <citation type="journal article" date="2010" name="Plant Physiol.">
        <title>High-affinity K(+) transport in Arabidopsis: AtHAK5 and AKT1 are vital for seedling establishment and postgermination growth under low-potassium conditions.</title>
        <authorList>
            <person name="Pyo Y.J."/>
            <person name="Gierth M."/>
            <person name="Schroeder J.I."/>
            <person name="Cho M.H."/>
        </authorList>
    </citation>
    <scope>FUNCTION</scope>
</reference>
<reference key="18">
    <citation type="journal article" date="2013" name="Plant J.">
        <title>Calcineurin B-like protein CBL10 directly interacts with AKT1 and modulates K+ homeostasis in Arabidopsis.</title>
        <authorList>
            <person name="Ren X.L."/>
            <person name="Qi G.N."/>
            <person name="Feng H.Q."/>
            <person name="Zhao S."/>
            <person name="Zhao S.S."/>
            <person name="Wang Y."/>
            <person name="Wu W.H."/>
        </authorList>
    </citation>
    <scope>INTERACTION WITH CBL10</scope>
</reference>
<reference key="19">
    <citation type="journal article" date="2014" name="Acta Crystallogr. F Struct. Biol. Commun.">
        <title>Preliminary crystallographic analysis of the ankyrin-repeat domain of Arabidopsis thaliana AKT1: identification of the domain boundaries for protein crystallization.</title>
        <authorList>
            <person name="Chaves-Sanjuan A."/>
            <person name="Sanchez-Barrena M.J."/>
            <person name="Gonzalez-Rubio J.M."/>
            <person name="Albert A."/>
        </authorList>
    </citation>
    <scope>CRYSTALLIZATION OF THE ANKYRIN-REPEAT DOMAIN</scope>
</reference>
<reference key="20">
    <citation type="submission" date="2015-07" db="PDB data bank">
        <title>Structure of the Ankyrin Domain of Akt1.</title>
        <authorList>
            <person name="Chaves-Sanjuan A."/>
            <person name="Gonzalez-Rubio J.M."/>
            <person name="Sanchez-Barrena M.J."/>
            <person name="Albert A."/>
        </authorList>
    </citation>
    <scope>X-RAY CRYSTALLOGRAPHY (1.87 ANGSTROMS) OF 518-702</scope>
</reference>
<sequence>MRGGALLCGQVQDEIEQLSRESSHFSLSTGILPSLGARSNRRVKLRRFVVSPYDHKYRIWEAFLVVLVVYTAWVSPFEFGFLRKPRPPLSITDNIVNAFFAIDIIMTFFVGYLDKSTYLIVDDRKQIAFKYLRSWFLLDLVSTIPSEAAMRISSQSYGLFNMLRLWRLRRVGALFARLEKDRNFNYFWVRCAKLVCVTLFAVHCAACFYYLIAARNSNPAKTWIGANVANFLEESLWMRYVTSMYWSITTLTTVGYGDLHPVNTKEMIFDIFYMLFNLGLTAYLIGNMTNLVVHGTSRTRNFRDTIQAASNFAHRNHLPPRLQDQMLAHLCLKYRTDSEGLQQQETLDALPKAIRSSISHFLFYSLMDKVYLFRGVSNDLLFQLVSEMKAEYFPPKEDVILQNEAPTDFYILVNGTADLVDVDTGTESIVREVKAGDIIGEIGVLCYRPQLFTVRTKRLCQLLRMNRTTFLNIIQANVGDGTIIMNNLLQHLKEMNDPVMTNVLLEIENMLARGKMDLPLNLCFAAIREDDLLLHQLLKRGLDPNESDNNGRTPLHIAASKGTLNCVLLLLEYHADPNCRDAEGSVPLWEAMVEGHEKVVKVLLEHGSTIDAGDVGHFACTAAEQGNLKLLKEIVLHGGDVTRPRATGTSALHTAVCEENIEMVKYLLEQGADVNKQDMHGWTPRDLAEQQGHEDIKALFREKLHERRVHIETSSSVPILKTGIRFLGRFTSEPNIRPASREVSFRIRETRARRKTNNFDNSLFGILANQSVPKNGLATVDEGRTGNPVRVTISCAEKDDIAGKLVLLPGSFKELLELGSNKFGIVATKVMNKDNNAEIDDVDVIRDGDHLIFATDS</sequence>
<feature type="chain" id="PRO_0000054121" description="Potassium channel AKT1">
    <location>
        <begin position="1"/>
        <end position="857"/>
    </location>
</feature>
<feature type="topological domain" description="Cytoplasmic" evidence="1">
    <location>
        <begin position="1"/>
        <end position="61"/>
    </location>
</feature>
<feature type="transmembrane region" description="Helical; Name=Segment S1" evidence="1">
    <location>
        <begin position="62"/>
        <end position="82"/>
    </location>
</feature>
<feature type="topological domain" description="Extracellular" evidence="1">
    <location>
        <begin position="83"/>
        <end position="90"/>
    </location>
</feature>
<feature type="transmembrane region" description="Helical; Name=Segment S2" evidence="1">
    <location>
        <begin position="91"/>
        <end position="111"/>
    </location>
</feature>
<feature type="topological domain" description="Cytoplasmic" evidence="1">
    <location>
        <begin position="112"/>
        <end position="134"/>
    </location>
</feature>
<feature type="transmembrane region" description="Helical; Name=Segment S3" evidence="1">
    <location>
        <begin position="135"/>
        <end position="155"/>
    </location>
</feature>
<feature type="topological domain" description="Extracellular" evidence="1">
    <location>
        <begin position="156"/>
        <end position="158"/>
    </location>
</feature>
<feature type="transmembrane region" description="Helical; Voltage-sensor; Name=Segment S4" evidence="1">
    <location>
        <begin position="159"/>
        <end position="179"/>
    </location>
</feature>
<feature type="topological domain" description="Cytoplasmic" evidence="1">
    <location>
        <begin position="180"/>
        <end position="193"/>
    </location>
</feature>
<feature type="transmembrane region" description="Helical; Name=Segment S5" evidence="1">
    <location>
        <begin position="194"/>
        <end position="214"/>
    </location>
</feature>
<feature type="topological domain" description="Extracellular" evidence="1">
    <location>
        <begin position="215"/>
        <end position="241"/>
    </location>
</feature>
<feature type="intramembrane region" description="Pore-forming; Name=Segment H5" evidence="1">
    <location>
        <begin position="242"/>
        <end position="261"/>
    </location>
</feature>
<feature type="topological domain" description="Extracellular" evidence="1">
    <location>
        <begin position="262"/>
        <end position="265"/>
    </location>
</feature>
<feature type="transmembrane region" description="Helical; Name=Segment S6" evidence="1">
    <location>
        <begin position="266"/>
        <end position="286"/>
    </location>
</feature>
<feature type="topological domain" description="Cytoplasmic" evidence="1">
    <location>
        <begin position="287"/>
        <end position="857"/>
    </location>
</feature>
<feature type="repeat" description="ANK 1" evidence="1">
    <location>
        <begin position="515"/>
        <end position="546"/>
    </location>
</feature>
<feature type="repeat" description="ANK 2" evidence="1">
    <location>
        <begin position="550"/>
        <end position="579"/>
    </location>
</feature>
<feature type="repeat" description="ANK 3" evidence="1">
    <location>
        <begin position="583"/>
        <end position="612"/>
    </location>
</feature>
<feature type="repeat" description="ANK 4" evidence="1">
    <location>
        <begin position="614"/>
        <end position="643"/>
    </location>
</feature>
<feature type="repeat" description="ANK 5" evidence="1">
    <location>
        <begin position="647"/>
        <end position="676"/>
    </location>
</feature>
<feature type="repeat" description="ANK 6" evidence="1">
    <location>
        <begin position="680"/>
        <end position="709"/>
    </location>
</feature>
<feature type="domain" description="KHA" evidence="3">
    <location>
        <begin position="790"/>
        <end position="857"/>
    </location>
</feature>
<feature type="binding site" evidence="2">
    <location>
        <begin position="372"/>
        <end position="493"/>
    </location>
    <ligand>
        <name>a nucleoside 3',5'-cyclic phosphate</name>
        <dbReference type="ChEBI" id="CHEBI:58464"/>
    </ligand>
</feature>
<feature type="helix" evidence="17">
    <location>
        <begin position="5"/>
        <end position="14"/>
    </location>
</feature>
<feature type="helix" evidence="19">
    <location>
        <begin position="55"/>
        <end position="81"/>
    </location>
</feature>
<feature type="helix" evidence="19">
    <location>
        <begin position="87"/>
        <end position="90"/>
    </location>
</feature>
<feature type="helix" evidence="19">
    <location>
        <begin position="92"/>
        <end position="106"/>
    </location>
</feature>
<feature type="turn" evidence="17">
    <location>
        <begin position="107"/>
        <end position="109"/>
    </location>
</feature>
<feature type="turn" evidence="19">
    <location>
        <begin position="115"/>
        <end position="117"/>
    </location>
</feature>
<feature type="helix" evidence="19">
    <location>
        <begin position="126"/>
        <end position="134"/>
    </location>
</feature>
<feature type="helix" evidence="19">
    <location>
        <begin position="136"/>
        <end position="141"/>
    </location>
</feature>
<feature type="helix" evidence="19">
    <location>
        <begin position="146"/>
        <end position="149"/>
    </location>
</feature>
<feature type="turn" evidence="19">
    <location>
        <begin position="150"/>
        <end position="152"/>
    </location>
</feature>
<feature type="turn" evidence="19">
    <location>
        <begin position="156"/>
        <end position="159"/>
    </location>
</feature>
<feature type="helix" evidence="19">
    <location>
        <begin position="160"/>
        <end position="168"/>
    </location>
</feature>
<feature type="helix" evidence="19">
    <location>
        <begin position="169"/>
        <end position="179"/>
    </location>
</feature>
<feature type="strand" evidence="19">
    <location>
        <begin position="182"/>
        <end position="184"/>
    </location>
</feature>
<feature type="helix" evidence="19">
    <location>
        <begin position="187"/>
        <end position="190"/>
    </location>
</feature>
<feature type="helix" evidence="19">
    <location>
        <begin position="192"/>
        <end position="215"/>
    </location>
</feature>
<feature type="strand" evidence="19">
    <location>
        <begin position="216"/>
        <end position="218"/>
    </location>
</feature>
<feature type="helix" evidence="19">
    <location>
        <begin position="219"/>
        <end position="221"/>
    </location>
</feature>
<feature type="turn" evidence="19">
    <location>
        <begin position="223"/>
        <end position="227"/>
    </location>
</feature>
<feature type="helix" evidence="19">
    <location>
        <begin position="231"/>
        <end position="233"/>
    </location>
</feature>
<feature type="helix" evidence="19">
    <location>
        <begin position="236"/>
        <end position="251"/>
    </location>
</feature>
<feature type="strand" evidence="19">
    <location>
        <begin position="257"/>
        <end position="259"/>
    </location>
</feature>
<feature type="helix" evidence="19">
    <location>
        <begin position="264"/>
        <end position="315"/>
    </location>
</feature>
<feature type="helix" evidence="19">
    <location>
        <begin position="320"/>
        <end position="337"/>
    </location>
</feature>
<feature type="strand" evidence="19">
    <location>
        <begin position="340"/>
        <end position="342"/>
    </location>
</feature>
<feature type="helix" evidence="19">
    <location>
        <begin position="345"/>
        <end position="348"/>
    </location>
</feature>
<feature type="helix" evidence="19">
    <location>
        <begin position="352"/>
        <end position="367"/>
    </location>
</feature>
<feature type="strand" evidence="19">
    <location>
        <begin position="370"/>
        <end position="375"/>
    </location>
</feature>
<feature type="helix" evidence="19">
    <location>
        <begin position="378"/>
        <end position="386"/>
    </location>
</feature>
<feature type="strand" evidence="19">
    <location>
        <begin position="389"/>
        <end position="393"/>
    </location>
</feature>
<feature type="strand" evidence="17">
    <location>
        <begin position="398"/>
        <end position="400"/>
    </location>
</feature>
<feature type="strand" evidence="19">
    <location>
        <begin position="402"/>
        <end position="404"/>
    </location>
</feature>
<feature type="strand" evidence="19">
    <location>
        <begin position="408"/>
        <end position="415"/>
    </location>
</feature>
<feature type="strand" evidence="19">
    <location>
        <begin position="417"/>
        <end position="423"/>
    </location>
</feature>
<feature type="strand" evidence="19">
    <location>
        <begin position="426"/>
        <end position="433"/>
    </location>
</feature>
<feature type="strand" evidence="19">
    <location>
        <begin position="438"/>
        <end position="440"/>
    </location>
</feature>
<feature type="helix" evidence="19">
    <location>
        <begin position="441"/>
        <end position="444"/>
    </location>
</feature>
<feature type="turn" evidence="18">
    <location>
        <begin position="445"/>
        <end position="447"/>
    </location>
</feature>
<feature type="strand" evidence="19">
    <location>
        <begin position="451"/>
        <end position="458"/>
    </location>
</feature>
<feature type="strand" evidence="19">
    <location>
        <begin position="460"/>
        <end position="466"/>
    </location>
</feature>
<feature type="helix" evidence="19">
    <location>
        <begin position="467"/>
        <end position="474"/>
    </location>
</feature>
<feature type="helix" evidence="19">
    <location>
        <begin position="475"/>
        <end position="477"/>
    </location>
</feature>
<feature type="helix" evidence="19">
    <location>
        <begin position="478"/>
        <end position="494"/>
    </location>
</feature>
<feature type="helix" evidence="19">
    <location>
        <begin position="498"/>
        <end position="507"/>
    </location>
</feature>
<feature type="helix" evidence="19">
    <location>
        <begin position="509"/>
        <end position="512"/>
    </location>
</feature>
<feature type="helix" evidence="16">
    <location>
        <begin position="522"/>
        <end position="527"/>
    </location>
</feature>
<feature type="helix" evidence="16">
    <location>
        <begin position="531"/>
        <end position="539"/>
    </location>
</feature>
<feature type="helix" evidence="16">
    <location>
        <begin position="554"/>
        <end position="561"/>
    </location>
</feature>
<feature type="helix" evidence="16">
    <location>
        <begin position="564"/>
        <end position="572"/>
    </location>
</feature>
<feature type="helix" evidence="16">
    <location>
        <begin position="587"/>
        <end position="593"/>
    </location>
</feature>
<feature type="helix" evidence="16">
    <location>
        <begin position="597"/>
        <end position="605"/>
    </location>
</feature>
<feature type="helix" evidence="16">
    <location>
        <begin position="610"/>
        <end position="612"/>
    </location>
</feature>
<feature type="helix" evidence="16">
    <location>
        <begin position="615"/>
        <end position="624"/>
    </location>
</feature>
<feature type="helix" evidence="16">
    <location>
        <begin position="628"/>
        <end position="636"/>
    </location>
</feature>
<feature type="helix" evidence="16">
    <location>
        <begin position="651"/>
        <end position="657"/>
    </location>
</feature>
<feature type="helix" evidence="16">
    <location>
        <begin position="661"/>
        <end position="669"/>
    </location>
</feature>
<feature type="helix" evidence="16">
    <location>
        <begin position="684"/>
        <end position="690"/>
    </location>
</feature>
<feature type="helix" evidence="16">
    <location>
        <begin position="694"/>
        <end position="701"/>
    </location>
</feature>
<organism>
    <name type="scientific">Arabidopsis thaliana</name>
    <name type="common">Mouse-ear cress</name>
    <dbReference type="NCBI Taxonomy" id="3702"/>
    <lineage>
        <taxon>Eukaryota</taxon>
        <taxon>Viridiplantae</taxon>
        <taxon>Streptophyta</taxon>
        <taxon>Embryophyta</taxon>
        <taxon>Tracheophyta</taxon>
        <taxon>Spermatophyta</taxon>
        <taxon>Magnoliopsida</taxon>
        <taxon>eudicotyledons</taxon>
        <taxon>Gunneridae</taxon>
        <taxon>Pentapetalae</taxon>
        <taxon>rosids</taxon>
        <taxon>malvids</taxon>
        <taxon>Brassicales</taxon>
        <taxon>Brassicaceae</taxon>
        <taxon>Camelineae</taxon>
        <taxon>Arabidopsis</taxon>
    </lineage>
</organism>